<proteinExistence type="predicted"/>
<evidence type="ECO:0000250" key="1"/>
<evidence type="ECO:0000250" key="2">
    <source>
        <dbReference type="UniProtKB" id="P05407"/>
    </source>
</evidence>
<evidence type="ECO:0000255" key="3">
    <source>
        <dbReference type="PROSITE-ProRule" id="PRU00193"/>
    </source>
</evidence>
<evidence type="ECO:0000256" key="4">
    <source>
        <dbReference type="SAM" id="MobiDB-lite"/>
    </source>
</evidence>
<evidence type="ECO:0000305" key="5"/>
<comment type="function">
    <text>Required for activation of most nif operons, which are directly involved in nitrogen fixation.</text>
</comment>
<comment type="subunit">
    <text>Interacts with sigma-54.</text>
</comment>
<comment type="sequence caution" evidence="5">
    <conflict type="erroneous initiation">
        <sequence resource="EMBL-CDS" id="CAA26471"/>
    </conflict>
</comment>
<keyword id="KW-0010">Activator</keyword>
<keyword id="KW-0067">ATP-binding</keyword>
<keyword id="KW-0238">DNA-binding</keyword>
<keyword id="KW-0479">Metal-binding</keyword>
<keyword id="KW-0535">Nitrogen fixation</keyword>
<keyword id="KW-0547">Nucleotide-binding</keyword>
<keyword id="KW-0614">Plasmid</keyword>
<keyword id="KW-1185">Reference proteome</keyword>
<keyword id="KW-0804">Transcription</keyword>
<keyword id="KW-0805">Transcription regulation</keyword>
<keyword id="KW-0902">Two-component regulatory system</keyword>
<gene>
    <name type="primary">nifA</name>
    <name type="synonym">fixD</name>
    <name type="ordered locus">RA0443</name>
    <name type="ORF">SMa0815</name>
</gene>
<sequence length="541" mass="59865">MRKQDKRSAEIYSISKALMAPTRLETTLNNFVNTLSLILRMRRGGLEIPASEGETKITAATRNSGSPSAADYTVPKAAIDQVMTAGRLVVPDVCNSELFKDQIKWRGIGPTAFIAAAVEVDHETGGMLWFECAEESDYDYEEEVHFLSMAANLAGRAIRLHRTISRRERTFAEEQQEQQNSRDEQSQSSARQRLLKNDGIIGESTALMTAVDTAKVMAETNSIVLLRGETGTGKECFAKLIHQHSTRQKKPFIKFNCPALSESLLESELFGHEKGAFTGAIAQRVGRFESANGGTLLLDEIGEIPPAFQAKLLRVIQEGEFERVGGTKTLKVDVRLIFATNKDLEMAVQNGEFREDLYYRISGVPLILPPLRHRDGDIPLLARAFLQRFNEENGRDLHFAPSALDHLSKCKFPGNVRELENCVRRTATLARSKTITSSDFACQTDQCFSSRLWKGVHCSHGHIEIDAPAGTTPLLGAPANDVPPKEPGSAGVASNLIERDRLISALEEAGWNQAKAARILEKTPRQVGYALRRHGVDVRKL</sequence>
<name>NIFA_RHIME</name>
<dbReference type="EMBL" id="X02615">
    <property type="protein sequence ID" value="CAA26470.1"/>
    <property type="molecule type" value="Genomic_DNA"/>
</dbReference>
<dbReference type="EMBL" id="X02615">
    <property type="protein sequence ID" value="CAA26471.1"/>
    <property type="status" value="ALT_INIT"/>
    <property type="molecule type" value="Genomic_DNA"/>
</dbReference>
<dbReference type="EMBL" id="X03065">
    <property type="protein sequence ID" value="CAA26869.1"/>
    <property type="molecule type" value="Genomic_DNA"/>
</dbReference>
<dbReference type="EMBL" id="AE006469">
    <property type="protein sequence ID" value="AAK65101.2"/>
    <property type="molecule type" value="Genomic_DNA"/>
</dbReference>
<dbReference type="PIR" id="A03563">
    <property type="entry name" value="RGZRAM"/>
</dbReference>
<dbReference type="PIR" id="C95317">
    <property type="entry name" value="C95317"/>
</dbReference>
<dbReference type="RefSeq" id="NP_435689.2">
    <property type="nucleotide sequence ID" value="NC_003037.1"/>
</dbReference>
<dbReference type="RefSeq" id="WP_010967431.1">
    <property type="nucleotide sequence ID" value="NC_003037.1"/>
</dbReference>
<dbReference type="SMR" id="P03028"/>
<dbReference type="EnsemblBacteria" id="AAK65101">
    <property type="protein sequence ID" value="AAK65101"/>
    <property type="gene ID" value="SMa0815"/>
</dbReference>
<dbReference type="KEGG" id="sme:SMa0815"/>
<dbReference type="PATRIC" id="fig|266834.11.peg.456"/>
<dbReference type="HOGENOM" id="CLU_000445_95_2_5"/>
<dbReference type="OrthoDB" id="9761019at2"/>
<dbReference type="Proteomes" id="UP000001976">
    <property type="component" value="Plasmid pSymA"/>
</dbReference>
<dbReference type="GO" id="GO:0005524">
    <property type="term" value="F:ATP binding"/>
    <property type="evidence" value="ECO:0007669"/>
    <property type="project" value="UniProtKB-KW"/>
</dbReference>
<dbReference type="GO" id="GO:0016887">
    <property type="term" value="F:ATP hydrolysis activity"/>
    <property type="evidence" value="ECO:0007669"/>
    <property type="project" value="InterPro"/>
</dbReference>
<dbReference type="GO" id="GO:0003700">
    <property type="term" value="F:DNA-binding transcription factor activity"/>
    <property type="evidence" value="ECO:0007669"/>
    <property type="project" value="InterPro"/>
</dbReference>
<dbReference type="GO" id="GO:0046872">
    <property type="term" value="F:metal ion binding"/>
    <property type="evidence" value="ECO:0007669"/>
    <property type="project" value="UniProtKB-KW"/>
</dbReference>
<dbReference type="GO" id="GO:0043565">
    <property type="term" value="F:sequence-specific DNA binding"/>
    <property type="evidence" value="ECO:0007669"/>
    <property type="project" value="InterPro"/>
</dbReference>
<dbReference type="GO" id="GO:0009399">
    <property type="term" value="P:nitrogen fixation"/>
    <property type="evidence" value="ECO:0007669"/>
    <property type="project" value="UniProtKB-KW"/>
</dbReference>
<dbReference type="GO" id="GO:0000160">
    <property type="term" value="P:phosphorelay signal transduction system"/>
    <property type="evidence" value="ECO:0007669"/>
    <property type="project" value="UniProtKB-KW"/>
</dbReference>
<dbReference type="CDD" id="cd00009">
    <property type="entry name" value="AAA"/>
    <property type="match status" value="1"/>
</dbReference>
<dbReference type="FunFam" id="3.40.50.300:FF:000006">
    <property type="entry name" value="DNA-binding transcriptional regulator NtrC"/>
    <property type="match status" value="1"/>
</dbReference>
<dbReference type="Gene3D" id="1.10.8.60">
    <property type="match status" value="1"/>
</dbReference>
<dbReference type="Gene3D" id="3.30.450.40">
    <property type="match status" value="1"/>
</dbReference>
<dbReference type="Gene3D" id="1.10.10.60">
    <property type="entry name" value="Homeodomain-like"/>
    <property type="match status" value="1"/>
</dbReference>
<dbReference type="Gene3D" id="3.40.50.300">
    <property type="entry name" value="P-loop containing nucleotide triphosphate hydrolases"/>
    <property type="match status" value="1"/>
</dbReference>
<dbReference type="InterPro" id="IPR003593">
    <property type="entry name" value="AAA+_ATPase"/>
</dbReference>
<dbReference type="InterPro" id="IPR003018">
    <property type="entry name" value="GAF"/>
</dbReference>
<dbReference type="InterPro" id="IPR029016">
    <property type="entry name" value="GAF-like_dom_sf"/>
</dbReference>
<dbReference type="InterPro" id="IPR002197">
    <property type="entry name" value="HTH_Fis"/>
</dbReference>
<dbReference type="InterPro" id="IPR010113">
    <property type="entry name" value="Nif-specific_regulatory_prot"/>
</dbReference>
<dbReference type="InterPro" id="IPR027417">
    <property type="entry name" value="P-loop_NTPase"/>
</dbReference>
<dbReference type="InterPro" id="IPR002078">
    <property type="entry name" value="Sigma_54_int"/>
</dbReference>
<dbReference type="InterPro" id="IPR025662">
    <property type="entry name" value="Sigma_54_int_dom_ATP-bd_1"/>
</dbReference>
<dbReference type="InterPro" id="IPR025943">
    <property type="entry name" value="Sigma_54_int_dom_ATP-bd_2"/>
</dbReference>
<dbReference type="InterPro" id="IPR025944">
    <property type="entry name" value="Sigma_54_int_dom_CS"/>
</dbReference>
<dbReference type="NCBIfam" id="TIGR01817">
    <property type="entry name" value="nifA"/>
    <property type="match status" value="1"/>
</dbReference>
<dbReference type="PANTHER" id="PTHR32071:SF117">
    <property type="entry name" value="PTS-DEPENDENT DIHYDROXYACETONE KINASE OPERON REGULATORY PROTEIN-RELATED"/>
    <property type="match status" value="1"/>
</dbReference>
<dbReference type="PANTHER" id="PTHR32071">
    <property type="entry name" value="TRANSCRIPTIONAL REGULATORY PROTEIN"/>
    <property type="match status" value="1"/>
</dbReference>
<dbReference type="Pfam" id="PF01590">
    <property type="entry name" value="GAF"/>
    <property type="match status" value="1"/>
</dbReference>
<dbReference type="Pfam" id="PF02954">
    <property type="entry name" value="HTH_8"/>
    <property type="match status" value="1"/>
</dbReference>
<dbReference type="Pfam" id="PF00158">
    <property type="entry name" value="Sigma54_activat"/>
    <property type="match status" value="1"/>
</dbReference>
<dbReference type="PRINTS" id="PR01590">
    <property type="entry name" value="HTHFIS"/>
</dbReference>
<dbReference type="SMART" id="SM00382">
    <property type="entry name" value="AAA"/>
    <property type="match status" value="1"/>
</dbReference>
<dbReference type="SMART" id="SM00065">
    <property type="entry name" value="GAF"/>
    <property type="match status" value="1"/>
</dbReference>
<dbReference type="SUPFAM" id="SSF55781">
    <property type="entry name" value="GAF domain-like"/>
    <property type="match status" value="1"/>
</dbReference>
<dbReference type="SUPFAM" id="SSF52540">
    <property type="entry name" value="P-loop containing nucleoside triphosphate hydrolases"/>
    <property type="match status" value="1"/>
</dbReference>
<dbReference type="PROSITE" id="PS00675">
    <property type="entry name" value="SIGMA54_INTERACT_1"/>
    <property type="match status" value="1"/>
</dbReference>
<dbReference type="PROSITE" id="PS00676">
    <property type="entry name" value="SIGMA54_INTERACT_2"/>
    <property type="match status" value="1"/>
</dbReference>
<dbReference type="PROSITE" id="PS00688">
    <property type="entry name" value="SIGMA54_INTERACT_3"/>
    <property type="match status" value="1"/>
</dbReference>
<dbReference type="PROSITE" id="PS50045">
    <property type="entry name" value="SIGMA54_INTERACT_4"/>
    <property type="match status" value="1"/>
</dbReference>
<accession>P03028</accession>
<geneLocation type="plasmid">
    <name>pSymA</name>
    <name>megaplasmid 1</name>
</geneLocation>
<feature type="chain" id="PRO_0000081313" description="Nif-specific regulatory protein">
    <location>
        <begin position="1"/>
        <end position="541"/>
    </location>
</feature>
<feature type="domain" description="GAF">
    <location>
        <begin position="23"/>
        <end position="158"/>
    </location>
</feature>
<feature type="domain" description="Sigma-54 factor interaction" evidence="3">
    <location>
        <begin position="200"/>
        <end position="428"/>
    </location>
</feature>
<feature type="DNA-binding region" description="H-T-H motif" evidence="1">
    <location>
        <begin position="513"/>
        <end position="532"/>
    </location>
</feature>
<feature type="region of interest" description="Disordered" evidence="4">
    <location>
        <begin position="170"/>
        <end position="191"/>
    </location>
</feature>
<feature type="region of interest" description="Inter-domain linker">
    <location>
        <begin position="429"/>
        <end position="498"/>
    </location>
</feature>
<feature type="region of interest" description="C-terminal DNA-binding domain">
    <location>
        <begin position="499"/>
        <end position="541"/>
    </location>
</feature>
<feature type="binding site" evidence="3">
    <location>
        <begin position="228"/>
        <end position="235"/>
    </location>
    <ligand>
        <name>ATP</name>
        <dbReference type="ChEBI" id="CHEBI:30616"/>
    </ligand>
</feature>
<feature type="binding site" evidence="3">
    <location>
        <begin position="291"/>
        <end position="300"/>
    </location>
    <ligand>
        <name>ATP</name>
        <dbReference type="ChEBI" id="CHEBI:30616"/>
    </ligand>
</feature>
<feature type="binding site" evidence="2">
    <location>
        <position position="442"/>
    </location>
    <ligand>
        <name>a divalent metal cation</name>
        <dbReference type="ChEBI" id="CHEBI:60240"/>
    </ligand>
</feature>
<feature type="binding site" evidence="2">
    <location>
        <position position="447"/>
    </location>
    <ligand>
        <name>a divalent metal cation</name>
        <dbReference type="ChEBI" id="CHEBI:60240"/>
    </ligand>
</feature>
<organism>
    <name type="scientific">Rhizobium meliloti (strain 1021)</name>
    <name type="common">Ensifer meliloti</name>
    <name type="synonym">Sinorhizobium meliloti</name>
    <dbReference type="NCBI Taxonomy" id="266834"/>
    <lineage>
        <taxon>Bacteria</taxon>
        <taxon>Pseudomonadati</taxon>
        <taxon>Pseudomonadota</taxon>
        <taxon>Alphaproteobacteria</taxon>
        <taxon>Hyphomicrobiales</taxon>
        <taxon>Rhizobiaceae</taxon>
        <taxon>Sinorhizobium/Ensifer group</taxon>
        <taxon>Sinorhizobium</taxon>
    </lineage>
</organism>
<reference key="1">
    <citation type="journal article" date="1985" name="Nucleic Acids Res.">
        <title>Nitrogen fixation specific regulatory genes of Klebsiella pneumoniae and Rhizobium meliloti share homology with the general nitrogen regulatory gene ntrC of K. pneumoniae.</title>
        <authorList>
            <person name="Buikema W.J."/>
            <person name="Szeto W.W."/>
            <person name="Lemley P.V."/>
            <person name="Orme-Johnson W.H."/>
            <person name="Ausubel F.M."/>
        </authorList>
    </citation>
    <scope>NUCLEOTIDE SEQUENCE [GENOMIC DNA]</scope>
</reference>
<reference key="2">
    <citation type="submission" date="1986-02" db="EMBL/GenBank/DDBJ databases">
        <title>Mapping and expression of a regulatory nitrogen fixation gene (fixD) of Rhizobium meliloti.</title>
        <authorList>
            <person name="Weber G."/>
            <person name="Reilaender H."/>
            <person name="Puehler A."/>
        </authorList>
    </citation>
    <scope>NUCLEOTIDE SEQUENCE [GENOMIC DNA]</scope>
</reference>
<reference key="3">
    <citation type="journal article" date="2001" name="Proc. Natl. Acad. Sci. U.S.A.">
        <title>Nucleotide sequence and predicted functions of the entire Sinorhizobium meliloti pSymA megaplasmid.</title>
        <authorList>
            <person name="Barnett M.J."/>
            <person name="Fisher R.F."/>
            <person name="Jones T."/>
            <person name="Komp C."/>
            <person name="Abola A.P."/>
            <person name="Barloy-Hubler F."/>
            <person name="Bowser L."/>
            <person name="Capela D."/>
            <person name="Galibert F."/>
            <person name="Gouzy J."/>
            <person name="Gurjal M."/>
            <person name="Hong A."/>
            <person name="Huizar L."/>
            <person name="Hyman R.W."/>
            <person name="Kahn D."/>
            <person name="Kahn M.L."/>
            <person name="Kalman S."/>
            <person name="Keating D.H."/>
            <person name="Palm C."/>
            <person name="Peck M.C."/>
            <person name="Surzycki R."/>
            <person name="Wells D.H."/>
            <person name="Yeh K.-C."/>
            <person name="Davis R.W."/>
            <person name="Federspiel N.A."/>
            <person name="Long S.R."/>
        </authorList>
    </citation>
    <scope>NUCLEOTIDE SEQUENCE [LARGE SCALE GENOMIC DNA]</scope>
    <source>
        <strain>1021</strain>
    </source>
</reference>
<reference key="4">
    <citation type="journal article" date="2001" name="Science">
        <title>The composite genome of the legume symbiont Sinorhizobium meliloti.</title>
        <authorList>
            <person name="Galibert F."/>
            <person name="Finan T.M."/>
            <person name="Long S.R."/>
            <person name="Puehler A."/>
            <person name="Abola P."/>
            <person name="Ampe F."/>
            <person name="Barloy-Hubler F."/>
            <person name="Barnett M.J."/>
            <person name="Becker A."/>
            <person name="Boistard P."/>
            <person name="Bothe G."/>
            <person name="Boutry M."/>
            <person name="Bowser L."/>
            <person name="Buhrmester J."/>
            <person name="Cadieu E."/>
            <person name="Capela D."/>
            <person name="Chain P."/>
            <person name="Cowie A."/>
            <person name="Davis R.W."/>
            <person name="Dreano S."/>
            <person name="Federspiel N.A."/>
            <person name="Fisher R.F."/>
            <person name="Gloux S."/>
            <person name="Godrie T."/>
            <person name="Goffeau A."/>
            <person name="Golding B."/>
            <person name="Gouzy J."/>
            <person name="Gurjal M."/>
            <person name="Hernandez-Lucas I."/>
            <person name="Hong A."/>
            <person name="Huizar L."/>
            <person name="Hyman R.W."/>
            <person name="Jones T."/>
            <person name="Kahn D."/>
            <person name="Kahn M.L."/>
            <person name="Kalman S."/>
            <person name="Keating D.H."/>
            <person name="Kiss E."/>
            <person name="Komp C."/>
            <person name="Lelaure V."/>
            <person name="Masuy D."/>
            <person name="Palm C."/>
            <person name="Peck M.C."/>
            <person name="Pohl T.M."/>
            <person name="Portetelle D."/>
            <person name="Purnelle B."/>
            <person name="Ramsperger U."/>
            <person name="Surzycki R."/>
            <person name="Thebault P."/>
            <person name="Vandenbol M."/>
            <person name="Vorhoelter F.J."/>
            <person name="Weidner S."/>
            <person name="Wells D.H."/>
            <person name="Wong K."/>
            <person name="Yeh K.-C."/>
            <person name="Batut J."/>
        </authorList>
    </citation>
    <scope>NUCLEOTIDE SEQUENCE [LARGE SCALE GENOMIC DNA]</scope>
    <source>
        <strain>1021</strain>
    </source>
</reference>
<protein>
    <recommendedName>
        <fullName>Nif-specific regulatory protein</fullName>
    </recommendedName>
</protein>